<dbReference type="EMBL" id="CP000458">
    <property type="protein sequence ID" value="ABK07190.1"/>
    <property type="molecule type" value="Genomic_DNA"/>
</dbReference>
<dbReference type="RefSeq" id="WP_006477115.1">
    <property type="nucleotide sequence ID" value="NC_008542.1"/>
</dbReference>
<dbReference type="SMR" id="A0K3W3"/>
<dbReference type="GeneID" id="83047218"/>
<dbReference type="KEGG" id="bch:Bcen2424_0436"/>
<dbReference type="HOGENOM" id="CLU_086034_5_3_4"/>
<dbReference type="GO" id="GO:0033281">
    <property type="term" value="C:TAT protein transport complex"/>
    <property type="evidence" value="ECO:0007669"/>
    <property type="project" value="UniProtKB-UniRule"/>
</dbReference>
<dbReference type="GO" id="GO:0008320">
    <property type="term" value="F:protein transmembrane transporter activity"/>
    <property type="evidence" value="ECO:0007669"/>
    <property type="project" value="UniProtKB-UniRule"/>
</dbReference>
<dbReference type="GO" id="GO:0043953">
    <property type="term" value="P:protein transport by the Tat complex"/>
    <property type="evidence" value="ECO:0007669"/>
    <property type="project" value="UniProtKB-UniRule"/>
</dbReference>
<dbReference type="Gene3D" id="1.20.5.3310">
    <property type="match status" value="1"/>
</dbReference>
<dbReference type="HAMAP" id="MF_00236">
    <property type="entry name" value="TatA_E"/>
    <property type="match status" value="1"/>
</dbReference>
<dbReference type="InterPro" id="IPR003369">
    <property type="entry name" value="TatA/B/E"/>
</dbReference>
<dbReference type="InterPro" id="IPR006312">
    <property type="entry name" value="TatA/E"/>
</dbReference>
<dbReference type="NCBIfam" id="NF002813">
    <property type="entry name" value="PRK02958.1"/>
    <property type="match status" value="1"/>
</dbReference>
<dbReference type="NCBIfam" id="TIGR01411">
    <property type="entry name" value="tatAE"/>
    <property type="match status" value="1"/>
</dbReference>
<dbReference type="PANTHER" id="PTHR42982">
    <property type="entry name" value="SEC-INDEPENDENT PROTEIN TRANSLOCASE PROTEIN TATA"/>
    <property type="match status" value="1"/>
</dbReference>
<dbReference type="PANTHER" id="PTHR42982:SF1">
    <property type="entry name" value="SEC-INDEPENDENT PROTEIN TRANSLOCASE PROTEIN TATA"/>
    <property type="match status" value="1"/>
</dbReference>
<dbReference type="Pfam" id="PF02416">
    <property type="entry name" value="TatA_B_E"/>
    <property type="match status" value="1"/>
</dbReference>
<sequence length="76" mass="8123">MGGLSIWHWLIVLLIVALVFGTKKLRNIGNDLGSAVKGFKDGMKEGETPADAQQLPRSGAVDVNAKETTRSDSNKA</sequence>
<keyword id="KW-0997">Cell inner membrane</keyword>
<keyword id="KW-1003">Cell membrane</keyword>
<keyword id="KW-0472">Membrane</keyword>
<keyword id="KW-0653">Protein transport</keyword>
<keyword id="KW-0811">Translocation</keyword>
<keyword id="KW-0812">Transmembrane</keyword>
<keyword id="KW-1133">Transmembrane helix</keyword>
<keyword id="KW-0813">Transport</keyword>
<evidence type="ECO:0000255" key="1">
    <source>
        <dbReference type="HAMAP-Rule" id="MF_00236"/>
    </source>
</evidence>
<evidence type="ECO:0000256" key="2">
    <source>
        <dbReference type="SAM" id="MobiDB-lite"/>
    </source>
</evidence>
<gene>
    <name evidence="1" type="primary">tatA</name>
    <name type="ordered locus">Bcen2424_0436</name>
</gene>
<name>TATA_BURCH</name>
<feature type="chain" id="PRO_1000044362" description="Sec-independent protein translocase protein TatA">
    <location>
        <begin position="1"/>
        <end position="76"/>
    </location>
</feature>
<feature type="transmembrane region" description="Helical" evidence="1">
    <location>
        <begin position="1"/>
        <end position="21"/>
    </location>
</feature>
<feature type="region of interest" description="Disordered" evidence="2">
    <location>
        <begin position="40"/>
        <end position="76"/>
    </location>
</feature>
<feature type="compositionally biased region" description="Basic and acidic residues" evidence="2">
    <location>
        <begin position="64"/>
        <end position="76"/>
    </location>
</feature>
<comment type="function">
    <text evidence="1">Part of the twin-arginine translocation (Tat) system that transports large folded proteins containing a characteristic twin-arginine motif in their signal peptide across membranes. TatA could form the protein-conducting channel of the Tat system.</text>
</comment>
<comment type="subunit">
    <text evidence="1">The Tat system comprises two distinct complexes: a TatABC complex, containing multiple copies of TatA, TatB and TatC subunits, and a separate TatA complex, containing only TatA subunits. Substrates initially bind to the TatABC complex, which probably triggers association of the separate TatA complex to form the active translocon.</text>
</comment>
<comment type="subcellular location">
    <subcellularLocation>
        <location evidence="1">Cell inner membrane</location>
        <topology evidence="1">Single-pass membrane protein</topology>
    </subcellularLocation>
</comment>
<comment type="similarity">
    <text evidence="1">Belongs to the TatA/E family.</text>
</comment>
<accession>A0K3W3</accession>
<reference key="1">
    <citation type="submission" date="2006-08" db="EMBL/GenBank/DDBJ databases">
        <title>Complete sequence of chromosome 1 of Burkholderia cenocepacia HI2424.</title>
        <authorList>
            <person name="Copeland A."/>
            <person name="Lucas S."/>
            <person name="Lapidus A."/>
            <person name="Barry K."/>
            <person name="Detter J.C."/>
            <person name="Glavina del Rio T."/>
            <person name="Hammon N."/>
            <person name="Israni S."/>
            <person name="Pitluck S."/>
            <person name="Chain P."/>
            <person name="Malfatti S."/>
            <person name="Shin M."/>
            <person name="Vergez L."/>
            <person name="Schmutz J."/>
            <person name="Larimer F."/>
            <person name="Land M."/>
            <person name="Hauser L."/>
            <person name="Kyrpides N."/>
            <person name="Kim E."/>
            <person name="LiPuma J.J."/>
            <person name="Gonzalez C.F."/>
            <person name="Konstantinidis K."/>
            <person name="Tiedje J.M."/>
            <person name="Richardson P."/>
        </authorList>
    </citation>
    <scope>NUCLEOTIDE SEQUENCE [LARGE SCALE GENOMIC DNA]</scope>
    <source>
        <strain>HI2424</strain>
    </source>
</reference>
<organism>
    <name type="scientific">Burkholderia cenocepacia (strain HI2424)</name>
    <dbReference type="NCBI Taxonomy" id="331272"/>
    <lineage>
        <taxon>Bacteria</taxon>
        <taxon>Pseudomonadati</taxon>
        <taxon>Pseudomonadota</taxon>
        <taxon>Betaproteobacteria</taxon>
        <taxon>Burkholderiales</taxon>
        <taxon>Burkholderiaceae</taxon>
        <taxon>Burkholderia</taxon>
        <taxon>Burkholderia cepacia complex</taxon>
    </lineage>
</organism>
<proteinExistence type="inferred from homology"/>
<protein>
    <recommendedName>
        <fullName evidence="1">Sec-independent protein translocase protein TatA</fullName>
    </recommendedName>
</protein>